<comment type="function">
    <text evidence="1">Catalyzes the phosphorylation of ribose 1,5-bisphosphate to 5-phospho-D-ribosyl alpha-1-diphosphate (PRPP).</text>
</comment>
<comment type="catalytic activity">
    <reaction evidence="1">
        <text>alpha-D-ribose 1,5-bisphosphate + ATP = 5-phospho-alpha-D-ribose 1-diphosphate + ADP</text>
        <dbReference type="Rhea" id="RHEA:20109"/>
        <dbReference type="ChEBI" id="CHEBI:30616"/>
        <dbReference type="ChEBI" id="CHEBI:58017"/>
        <dbReference type="ChEBI" id="CHEBI:68688"/>
        <dbReference type="ChEBI" id="CHEBI:456216"/>
        <dbReference type="EC" id="2.7.4.23"/>
    </reaction>
</comment>
<comment type="pathway">
    <text evidence="1">Metabolic intermediate biosynthesis; 5-phospho-alpha-D-ribose 1-diphosphate biosynthesis; 5-phospho-alpha-D-ribose 1-diphosphate from D-ribose 5-phosphate (route II): step 3/3.</text>
</comment>
<comment type="similarity">
    <text evidence="1">Belongs to the ribose 1,5-bisphosphokinase family.</text>
</comment>
<keyword id="KW-0067">ATP-binding</keyword>
<keyword id="KW-0547">Nucleotide-binding</keyword>
<keyword id="KW-1185">Reference proteome</keyword>
<keyword id="KW-0808">Transferase</keyword>
<dbReference type="EC" id="2.7.4.23" evidence="1"/>
<dbReference type="EMBL" id="AE009952">
    <property type="protein sequence ID" value="AAM84309.1"/>
    <property type="molecule type" value="Genomic_DNA"/>
</dbReference>
<dbReference type="EMBL" id="AE017042">
    <property type="protein sequence ID" value="AAS60888.1"/>
    <property type="molecule type" value="Genomic_DNA"/>
</dbReference>
<dbReference type="EMBL" id="AL590842">
    <property type="protein sequence ID" value="CAL22052.1"/>
    <property type="molecule type" value="Genomic_DNA"/>
</dbReference>
<dbReference type="PIR" id="AI0420">
    <property type="entry name" value="AI0420"/>
</dbReference>
<dbReference type="RefSeq" id="WP_002209285.1">
    <property type="nucleotide sequence ID" value="NZ_WUCM01000023.1"/>
</dbReference>
<dbReference type="RefSeq" id="YP_002348353.1">
    <property type="nucleotide sequence ID" value="NC_003143.1"/>
</dbReference>
<dbReference type="SMR" id="Q7CKG8"/>
<dbReference type="STRING" id="214092.YPO3464"/>
<dbReference type="PaxDb" id="214092-YPO3464"/>
<dbReference type="DNASU" id="1145668"/>
<dbReference type="EnsemblBacteria" id="AAS60888">
    <property type="protein sequence ID" value="AAS60888"/>
    <property type="gene ID" value="YP_0619"/>
</dbReference>
<dbReference type="GeneID" id="57975248"/>
<dbReference type="KEGG" id="ype:YPO3464"/>
<dbReference type="KEGG" id="ypk:y0721"/>
<dbReference type="KEGG" id="ypm:YP_0619"/>
<dbReference type="PATRIC" id="fig|214092.21.peg.3958"/>
<dbReference type="eggNOG" id="COG3709">
    <property type="taxonomic scope" value="Bacteria"/>
</dbReference>
<dbReference type="HOGENOM" id="CLU_102477_0_0_6"/>
<dbReference type="OMA" id="RLIWLTG"/>
<dbReference type="OrthoDB" id="341217at2"/>
<dbReference type="UniPathway" id="UPA00087">
    <property type="reaction ID" value="UER00175"/>
</dbReference>
<dbReference type="Proteomes" id="UP000000815">
    <property type="component" value="Chromosome"/>
</dbReference>
<dbReference type="Proteomes" id="UP000001019">
    <property type="component" value="Chromosome"/>
</dbReference>
<dbReference type="Proteomes" id="UP000002490">
    <property type="component" value="Chromosome"/>
</dbReference>
<dbReference type="GO" id="GO:0005829">
    <property type="term" value="C:cytosol"/>
    <property type="evidence" value="ECO:0000318"/>
    <property type="project" value="GO_Central"/>
</dbReference>
<dbReference type="GO" id="GO:0005524">
    <property type="term" value="F:ATP binding"/>
    <property type="evidence" value="ECO:0007669"/>
    <property type="project" value="UniProtKB-KW"/>
</dbReference>
<dbReference type="GO" id="GO:0033863">
    <property type="term" value="F:ribose 1,5-bisphosphate phosphokinase activity"/>
    <property type="evidence" value="ECO:0000318"/>
    <property type="project" value="GO_Central"/>
</dbReference>
<dbReference type="GO" id="GO:0006015">
    <property type="term" value="P:5-phosphoribose 1-diphosphate biosynthetic process"/>
    <property type="evidence" value="ECO:0000318"/>
    <property type="project" value="GO_Central"/>
</dbReference>
<dbReference type="GO" id="GO:0019634">
    <property type="term" value="P:organic phosphonate metabolic process"/>
    <property type="evidence" value="ECO:0007669"/>
    <property type="project" value="UniProtKB-UniRule"/>
</dbReference>
<dbReference type="FunFam" id="3.40.50.300:FF:000979">
    <property type="entry name" value="Ribose 1,5-bisphosphate phosphokinase PhnN"/>
    <property type="match status" value="1"/>
</dbReference>
<dbReference type="Gene3D" id="3.40.50.300">
    <property type="entry name" value="P-loop containing nucleotide triphosphate hydrolases"/>
    <property type="match status" value="1"/>
</dbReference>
<dbReference type="HAMAP" id="MF_00836">
    <property type="entry name" value="PhnN"/>
    <property type="match status" value="1"/>
</dbReference>
<dbReference type="InterPro" id="IPR008145">
    <property type="entry name" value="GK/Ca_channel_bsu"/>
</dbReference>
<dbReference type="InterPro" id="IPR008144">
    <property type="entry name" value="Guanylate_kin-like_dom"/>
</dbReference>
<dbReference type="InterPro" id="IPR027417">
    <property type="entry name" value="P-loop_NTPase"/>
</dbReference>
<dbReference type="InterPro" id="IPR012699">
    <property type="entry name" value="PhnN"/>
</dbReference>
<dbReference type="NCBIfam" id="TIGR02322">
    <property type="entry name" value="phosphon_PhnN"/>
    <property type="match status" value="1"/>
</dbReference>
<dbReference type="NCBIfam" id="NF007485">
    <property type="entry name" value="PRK10078.1"/>
    <property type="match status" value="1"/>
</dbReference>
<dbReference type="PANTHER" id="PTHR23117">
    <property type="entry name" value="GUANYLATE KINASE-RELATED"/>
    <property type="match status" value="1"/>
</dbReference>
<dbReference type="PANTHER" id="PTHR23117:SF8">
    <property type="entry name" value="RIBOSE 1,5-BISPHOSPHATE PHOSPHOKINASE PHNN"/>
    <property type="match status" value="1"/>
</dbReference>
<dbReference type="Pfam" id="PF00625">
    <property type="entry name" value="Guanylate_kin"/>
    <property type="match status" value="1"/>
</dbReference>
<dbReference type="SMART" id="SM00072">
    <property type="entry name" value="GuKc"/>
    <property type="match status" value="1"/>
</dbReference>
<dbReference type="SUPFAM" id="SSF52540">
    <property type="entry name" value="P-loop containing nucleoside triphosphate hydrolases"/>
    <property type="match status" value="1"/>
</dbReference>
<dbReference type="PROSITE" id="PS50052">
    <property type="entry name" value="GUANYLATE_KINASE_2"/>
    <property type="match status" value="1"/>
</dbReference>
<evidence type="ECO:0000255" key="1">
    <source>
        <dbReference type="HAMAP-Rule" id="MF_00836"/>
    </source>
</evidence>
<name>PHNN_YERPE</name>
<reference key="1">
    <citation type="journal article" date="2002" name="J. Bacteriol.">
        <title>Genome sequence of Yersinia pestis KIM.</title>
        <authorList>
            <person name="Deng W."/>
            <person name="Burland V."/>
            <person name="Plunkett G. III"/>
            <person name="Boutin A."/>
            <person name="Mayhew G.F."/>
            <person name="Liss P."/>
            <person name="Perna N.T."/>
            <person name="Rose D.J."/>
            <person name="Mau B."/>
            <person name="Zhou S."/>
            <person name="Schwartz D.C."/>
            <person name="Fetherston J.D."/>
            <person name="Lindler L.E."/>
            <person name="Brubaker R.R."/>
            <person name="Plano G.V."/>
            <person name="Straley S.C."/>
            <person name="McDonough K.A."/>
            <person name="Nilles M.L."/>
            <person name="Matson J.S."/>
            <person name="Blattner F.R."/>
            <person name="Perry R.D."/>
        </authorList>
    </citation>
    <scope>NUCLEOTIDE SEQUENCE [LARGE SCALE GENOMIC DNA]</scope>
    <source>
        <strain>KIM10+ / Biovar Mediaevalis</strain>
    </source>
</reference>
<reference key="2">
    <citation type="journal article" date="2001" name="Nature">
        <title>Genome sequence of Yersinia pestis, the causative agent of plague.</title>
        <authorList>
            <person name="Parkhill J."/>
            <person name="Wren B.W."/>
            <person name="Thomson N.R."/>
            <person name="Titball R.W."/>
            <person name="Holden M.T.G."/>
            <person name="Prentice M.B."/>
            <person name="Sebaihia M."/>
            <person name="James K.D."/>
            <person name="Churcher C.M."/>
            <person name="Mungall K.L."/>
            <person name="Baker S."/>
            <person name="Basham D."/>
            <person name="Bentley S.D."/>
            <person name="Brooks K."/>
            <person name="Cerdeno-Tarraga A.-M."/>
            <person name="Chillingworth T."/>
            <person name="Cronin A."/>
            <person name="Davies R.M."/>
            <person name="Davis P."/>
            <person name="Dougan G."/>
            <person name="Feltwell T."/>
            <person name="Hamlin N."/>
            <person name="Holroyd S."/>
            <person name="Jagels K."/>
            <person name="Karlyshev A.V."/>
            <person name="Leather S."/>
            <person name="Moule S."/>
            <person name="Oyston P.C.F."/>
            <person name="Quail M.A."/>
            <person name="Rutherford K.M."/>
            <person name="Simmonds M."/>
            <person name="Skelton J."/>
            <person name="Stevens K."/>
            <person name="Whitehead S."/>
            <person name="Barrell B.G."/>
        </authorList>
    </citation>
    <scope>NUCLEOTIDE SEQUENCE [LARGE SCALE GENOMIC DNA]</scope>
    <source>
        <strain>CO-92 / Biovar Orientalis</strain>
    </source>
</reference>
<reference key="3">
    <citation type="journal article" date="2004" name="DNA Res.">
        <title>Complete genome sequence of Yersinia pestis strain 91001, an isolate avirulent to humans.</title>
        <authorList>
            <person name="Song Y."/>
            <person name="Tong Z."/>
            <person name="Wang J."/>
            <person name="Wang L."/>
            <person name="Guo Z."/>
            <person name="Han Y."/>
            <person name="Zhang J."/>
            <person name="Pei D."/>
            <person name="Zhou D."/>
            <person name="Qin H."/>
            <person name="Pang X."/>
            <person name="Han Y."/>
            <person name="Zhai J."/>
            <person name="Li M."/>
            <person name="Cui B."/>
            <person name="Qi Z."/>
            <person name="Jin L."/>
            <person name="Dai R."/>
            <person name="Chen F."/>
            <person name="Li S."/>
            <person name="Ye C."/>
            <person name="Du Z."/>
            <person name="Lin W."/>
            <person name="Wang J."/>
            <person name="Yu J."/>
            <person name="Yang H."/>
            <person name="Wang J."/>
            <person name="Huang P."/>
            <person name="Yang R."/>
        </authorList>
    </citation>
    <scope>NUCLEOTIDE SEQUENCE [LARGE SCALE GENOMIC DNA]</scope>
    <source>
        <strain>91001 / Biovar Mediaevalis</strain>
    </source>
</reference>
<accession>Q7CKG8</accession>
<accession>Q74X43</accession>
<gene>
    <name evidence="1" type="primary">phnN</name>
    <name type="ordered locus">YPO3464</name>
    <name type="ordered locus">y0721</name>
    <name type="ordered locus">YP_0619</name>
</gene>
<proteinExistence type="inferred from homology"/>
<sequence>MARLIYLMGPSGAGKDCLLSALRNATPQNRVVAHRYITRPADAGAENHVALSKQEFIQRAEQGLFALHWQAHQHCYAIGIEINLWLQHGLDVLVNGSRAYLPEAQRRYRHQLLPLCLTVSPAILAQRLRQRGRENSEQIDARLQRAQHYQQQLPSHCLQLCNDGELQHTLNQLQQLLTLDTPLSDPVEDKPCN</sequence>
<feature type="chain" id="PRO_0000412803" description="Ribose 1,5-bisphosphate phosphokinase PhnN">
    <location>
        <begin position="1"/>
        <end position="193"/>
    </location>
</feature>
<feature type="binding site" evidence="1">
    <location>
        <begin position="9"/>
        <end position="16"/>
    </location>
    <ligand>
        <name>ATP</name>
        <dbReference type="ChEBI" id="CHEBI:30616"/>
    </ligand>
</feature>
<protein>
    <recommendedName>
        <fullName evidence="1">Ribose 1,5-bisphosphate phosphokinase PhnN</fullName>
        <ecNumber evidence="1">2.7.4.23</ecNumber>
    </recommendedName>
    <alternativeName>
        <fullName evidence="1">Ribose 1,5-bisphosphokinase</fullName>
    </alternativeName>
</protein>
<organism>
    <name type="scientific">Yersinia pestis</name>
    <dbReference type="NCBI Taxonomy" id="632"/>
    <lineage>
        <taxon>Bacteria</taxon>
        <taxon>Pseudomonadati</taxon>
        <taxon>Pseudomonadota</taxon>
        <taxon>Gammaproteobacteria</taxon>
        <taxon>Enterobacterales</taxon>
        <taxon>Yersiniaceae</taxon>
        <taxon>Yersinia</taxon>
    </lineage>
</organism>